<proteinExistence type="evidence at protein level"/>
<protein>
    <recommendedName>
        <fullName evidence="1">Acyl-CoA 6-desaturase</fullName>
        <ecNumber evidence="4">1.14.19.3</ecNumber>
        <ecNumber evidence="4">1.14.19.44</ecNumber>
    </recommendedName>
    <alternativeName>
        <fullName>Delta(5)/Delta(6) fatty acid desaturase</fullName>
        <shortName>D5D/D6D fatty acid desaturase</shortName>
        <shortName>Delta-5/Delta-6 fatty acid desaturase</shortName>
    </alternativeName>
    <alternativeName>
        <fullName>Fatty acid desaturase 2</fullName>
    </alternativeName>
</protein>
<organism>
    <name type="scientific">Danio rerio</name>
    <name type="common">Zebrafish</name>
    <name type="synonym">Brachydanio rerio</name>
    <dbReference type="NCBI Taxonomy" id="7955"/>
    <lineage>
        <taxon>Eukaryota</taxon>
        <taxon>Metazoa</taxon>
        <taxon>Chordata</taxon>
        <taxon>Craniata</taxon>
        <taxon>Vertebrata</taxon>
        <taxon>Euteleostomi</taxon>
        <taxon>Actinopterygii</taxon>
        <taxon>Neopterygii</taxon>
        <taxon>Teleostei</taxon>
        <taxon>Ostariophysi</taxon>
        <taxon>Cypriniformes</taxon>
        <taxon>Danionidae</taxon>
        <taxon>Danioninae</taxon>
        <taxon>Danio</taxon>
    </lineage>
</organism>
<evidence type="ECO:0000250" key="1">
    <source>
        <dbReference type="UniProtKB" id="O95864"/>
    </source>
</evidence>
<evidence type="ECO:0000255" key="2"/>
<evidence type="ECO:0000255" key="3">
    <source>
        <dbReference type="PROSITE-ProRule" id="PRU00279"/>
    </source>
</evidence>
<evidence type="ECO:0000269" key="4">
    <source>
    </source>
</evidence>
<evidence type="ECO:0000303" key="5">
    <source>
    </source>
</evidence>
<evidence type="ECO:0000305" key="6"/>
<evidence type="ECO:0000305" key="7">
    <source>
    </source>
</evidence>
<comment type="function">
    <text evidence="4">Fatty acid desaturase with bifunctional delta-5 and delta-6 activities. Component of a lipid metabolic pathway that catalyzes the biosynthesis of polyunsaturated fatty acids (PUFA) with preference toward n-3 substrates and Delta-6 function.</text>
</comment>
<comment type="catalytic activity">
    <reaction evidence="4">
        <text>(9Z,12Z)-octadecadienoyl-CoA + 2 Fe(II)-[cytochrome b5] + O2 + 2 H(+) = (6Z,9Z,12Z)-octadecatrienoyl-CoA + 2 Fe(III)-[cytochrome b5] + 2 H2O</text>
        <dbReference type="Rhea" id="RHEA:47140"/>
        <dbReference type="Rhea" id="RHEA-COMP:10438"/>
        <dbReference type="Rhea" id="RHEA-COMP:10439"/>
        <dbReference type="ChEBI" id="CHEBI:15377"/>
        <dbReference type="ChEBI" id="CHEBI:15378"/>
        <dbReference type="ChEBI" id="CHEBI:15379"/>
        <dbReference type="ChEBI" id="CHEBI:29033"/>
        <dbReference type="ChEBI" id="CHEBI:29034"/>
        <dbReference type="ChEBI" id="CHEBI:57363"/>
        <dbReference type="ChEBI" id="CHEBI:57383"/>
        <dbReference type="EC" id="1.14.19.3"/>
    </reaction>
    <physiologicalReaction direction="left-to-right" evidence="4">
        <dbReference type="Rhea" id="RHEA:47141"/>
    </physiologicalReaction>
</comment>
<comment type="catalytic activity">
    <reaction evidence="4">
        <text>(9Z,12Z,15Z)-octadecatrienoyl-CoA + 2 Fe(II)-[cytochrome b5] + O2 + 2 H(+) = (6Z,9Z,12Z,15Z)-octadecatetraenoyl-CoA + 2 Fe(III)-[cytochrome b5] + 2 H2O</text>
        <dbReference type="Rhea" id="RHEA:47144"/>
        <dbReference type="Rhea" id="RHEA-COMP:10438"/>
        <dbReference type="Rhea" id="RHEA-COMP:10439"/>
        <dbReference type="ChEBI" id="CHEBI:15377"/>
        <dbReference type="ChEBI" id="CHEBI:15378"/>
        <dbReference type="ChEBI" id="CHEBI:15379"/>
        <dbReference type="ChEBI" id="CHEBI:29033"/>
        <dbReference type="ChEBI" id="CHEBI:29034"/>
        <dbReference type="ChEBI" id="CHEBI:71489"/>
        <dbReference type="ChEBI" id="CHEBI:74034"/>
        <dbReference type="EC" id="1.14.19.3"/>
    </reaction>
    <physiologicalReaction direction="left-to-right" evidence="4">
        <dbReference type="Rhea" id="RHEA:47145"/>
    </physiologicalReaction>
</comment>
<comment type="catalytic activity">
    <reaction evidence="4">
        <text>(8Z,11Z,14Z,17Z)-eicosatetraenoyl-CoA + 2 Fe(II)-[cytochrome b5] + O2 + 2 H(+) = (5Z,8Z,11Z,14Z,17Z)-eicosapentaenoyl-CoA + 2 Fe(III)-[cytochrome b5] + 2 H2O</text>
        <dbReference type="Rhea" id="RHEA:46420"/>
        <dbReference type="Rhea" id="RHEA-COMP:10438"/>
        <dbReference type="Rhea" id="RHEA-COMP:10439"/>
        <dbReference type="ChEBI" id="CHEBI:15377"/>
        <dbReference type="ChEBI" id="CHEBI:15378"/>
        <dbReference type="ChEBI" id="CHEBI:15379"/>
        <dbReference type="ChEBI" id="CHEBI:29033"/>
        <dbReference type="ChEBI" id="CHEBI:29034"/>
        <dbReference type="ChEBI" id="CHEBI:73862"/>
        <dbReference type="ChEBI" id="CHEBI:74265"/>
        <dbReference type="EC" id="1.14.19.44"/>
    </reaction>
    <physiologicalReaction direction="left-to-right" evidence="4">
        <dbReference type="Rhea" id="RHEA:46421"/>
    </physiologicalReaction>
</comment>
<comment type="catalytic activity">
    <reaction evidence="4">
        <text>(8Z,11Z,14Z)-eicosatrienoyl-CoA + 2 Fe(II)-[cytochrome b5] + O2 + 2 H(+) = (5Z,8Z,11Z,14Z)-eicosatetraenoyl-CoA + 2 Fe(III)-[cytochrome b5] + 2 H2O</text>
        <dbReference type="Rhea" id="RHEA:46424"/>
        <dbReference type="Rhea" id="RHEA-COMP:10438"/>
        <dbReference type="Rhea" id="RHEA-COMP:10439"/>
        <dbReference type="ChEBI" id="CHEBI:15377"/>
        <dbReference type="ChEBI" id="CHEBI:15378"/>
        <dbReference type="ChEBI" id="CHEBI:15379"/>
        <dbReference type="ChEBI" id="CHEBI:29033"/>
        <dbReference type="ChEBI" id="CHEBI:29034"/>
        <dbReference type="ChEBI" id="CHEBI:57368"/>
        <dbReference type="ChEBI" id="CHEBI:74264"/>
        <dbReference type="EC" id="1.14.19.44"/>
    </reaction>
    <physiologicalReaction direction="left-to-right" evidence="4">
        <dbReference type="Rhea" id="RHEA:46425"/>
    </physiologicalReaction>
</comment>
<comment type="pathway">
    <text evidence="7">Lipid metabolism; polyunsaturated fatty acid biosynthesis.</text>
</comment>
<comment type="subcellular location">
    <subcellularLocation>
        <location evidence="6">Endoplasmic reticulum membrane</location>
        <topology evidence="6">Multi-pass membrane protein</topology>
    </subcellularLocation>
</comment>
<comment type="domain">
    <text evidence="5">The protein sequence includes a number of characteristic features of microsomal fatty acid desaturases including the three histidine boxes HXXXH, HXXHH, and QXXHH (these domains may contain the active site and/or be involved in metal ion binding), and the N-terminal cytochrome b5 domain containing the heme-binding motif, HPGG, similar to that of other fatty acid desaturases.</text>
</comment>
<comment type="similarity">
    <text evidence="6">Belongs to the fatty acid desaturase type 1 family.</text>
</comment>
<sequence length="444" mass="52032">MGGGGQQTDRITDTNGRFSSYTWEEVQKHTKHGDQWVVVERKVYNVSQWVKRHPGGLRILGHYAGEDATEAFTAFHPNLQLVRKYLKPLLIGELEASEPSQDRQKNAALVEDFRALRERLEAEGCFKTQPLFFALHLGHILLLEAIAFMMVWYFGTGWINTLIVAVILATAQSQAGWLQHDFGHLSVFKTSGMNHLVHKFVIGHLKGASAGWWNHRHFQHHAKPNIFKKDPDVNMLNAFVVGNVQPVEYGVKKIKHLPYNHQHKYFFFIGPPLLIPVYFQFQIFHNMISHGMWVDLLWCISYYVRYFLCYTQFYGVFWAIILFNFVRFMESHWFVWVTQMSHIPMNIDYEKNQDWLSMQLVATCNIEQSAFNDWFSGHLNFQIEHHLFPTVPRHNYWRAAPRVRALCEKYGVKYQEKTLYGAFADIIRSLEKSGELWLDAYLNK</sequence>
<name>FADS2_DANRE</name>
<feature type="chain" id="PRO_0000185408" description="Acyl-CoA 6-desaturase">
    <location>
        <begin position="1"/>
        <end position="444"/>
    </location>
</feature>
<feature type="topological domain" description="Cytoplasmic" evidence="6">
    <location>
        <begin position="1"/>
        <end position="130"/>
    </location>
</feature>
<feature type="transmembrane region" description="Helical" evidence="2">
    <location>
        <begin position="131"/>
        <end position="151"/>
    </location>
</feature>
<feature type="topological domain" description="Lumenal" evidence="6">
    <location>
        <begin position="152"/>
        <end position="157"/>
    </location>
</feature>
<feature type="transmembrane region" description="Helical" evidence="2">
    <location>
        <begin position="158"/>
        <end position="178"/>
    </location>
</feature>
<feature type="topological domain" description="Cytoplasmic" evidence="6">
    <location>
        <begin position="179"/>
        <end position="264"/>
    </location>
</feature>
<feature type="transmembrane region" description="Helical" evidence="2">
    <location>
        <begin position="265"/>
        <end position="285"/>
    </location>
</feature>
<feature type="topological domain" description="Lumenal" evidence="6">
    <location>
        <begin position="286"/>
        <end position="305"/>
    </location>
</feature>
<feature type="transmembrane region" description="Helical" evidence="2">
    <location>
        <begin position="306"/>
        <end position="326"/>
    </location>
</feature>
<feature type="topological domain" description="Cytoplasmic" evidence="6">
    <location>
        <begin position="327"/>
        <end position="444"/>
    </location>
</feature>
<feature type="domain" description="Cytochrome b5 heme-binding" evidence="3">
    <location>
        <begin position="18"/>
        <end position="95"/>
    </location>
</feature>
<feature type="short sequence motif" description="Histidine box-1">
    <location>
        <begin position="180"/>
        <end position="184"/>
    </location>
</feature>
<feature type="short sequence motif" description="Histidine box-2">
    <location>
        <begin position="217"/>
        <end position="221"/>
    </location>
</feature>
<feature type="short sequence motif" description="Histidine box-3">
    <location>
        <begin position="382"/>
        <end position="386"/>
    </location>
</feature>
<feature type="sequence conflict" description="In Ref. 2; AAH49438." evidence="6" ref="2">
    <original>V</original>
    <variation>M</variation>
    <location>
        <position position="26"/>
    </location>
</feature>
<feature type="sequence conflict" description="In Ref. 2; AAH49438." evidence="6" ref="2">
    <original>V</original>
    <variation>M</variation>
    <location>
        <position position="82"/>
    </location>
</feature>
<feature type="sequence conflict" description="In Ref. 2; AAH49438." evidence="6" ref="2">
    <original>M</original>
    <variation>V</variation>
    <location>
        <position position="149"/>
    </location>
</feature>
<feature type="sequence conflict" description="In Ref. 2; AAH49438." evidence="6" ref="2">
    <original>H</original>
    <variation>R</variation>
    <location>
        <position position="342"/>
    </location>
</feature>
<feature type="sequence conflict" description="In Ref. 2; AAH49438." evidence="6" ref="2">
    <original>K</original>
    <variation>Q</variation>
    <location>
        <position position="351"/>
    </location>
</feature>
<feature type="sequence conflict" description="In Ref. 2; AAH49438." evidence="6" ref="2">
    <original>V</original>
    <variation>M</variation>
    <location>
        <position position="391"/>
    </location>
</feature>
<feature type="sequence conflict" description="In Ref. 2; AAH49438." evidence="6" ref="2">
    <original>A</original>
    <variation>S</variation>
    <location>
        <position position="405"/>
    </location>
</feature>
<reference key="1">
    <citation type="journal article" date="2001" name="Proc. Natl. Acad. Sci. U.S.A.">
        <title>A vertebrate fatty acid desaturase with delta5 and delta6 activities.</title>
        <authorList>
            <person name="Hastings N."/>
            <person name="Agaba M."/>
            <person name="Tocher D.R."/>
            <person name="Leaver M.J."/>
            <person name="Dick J.R."/>
            <person name="Sargent J.R."/>
            <person name="Teale A.J."/>
        </authorList>
    </citation>
    <scope>NUCLEOTIDE SEQUENCE [MRNA]</scope>
    <scope>FUNCTION</scope>
    <scope>CATALYTIC ACTIVITY</scope>
    <scope>PATHWAY</scope>
    <scope>DOMAIN</scope>
    <source>
        <tissue>Liver</tissue>
    </source>
</reference>
<reference key="2">
    <citation type="submission" date="2003-03" db="EMBL/GenBank/DDBJ databases">
        <authorList>
            <consortium name="NIH - Zebrafish Gene Collection (ZGC) project"/>
        </authorList>
    </citation>
    <scope>NUCLEOTIDE SEQUENCE [LARGE SCALE MRNA]</scope>
</reference>
<gene>
    <name type="primary">fads2</name>
    <name type="synonym">fadsd6</name>
</gene>
<dbReference type="EC" id="1.14.19.3" evidence="4"/>
<dbReference type="EC" id="1.14.19.44" evidence="4"/>
<dbReference type="EMBL" id="AF309556">
    <property type="protein sequence ID" value="AAG25710.1"/>
    <property type="molecule type" value="mRNA"/>
</dbReference>
<dbReference type="EMBL" id="BC049438">
    <property type="protein sequence ID" value="AAH49438.1"/>
    <property type="molecule type" value="mRNA"/>
</dbReference>
<dbReference type="RefSeq" id="NP_571720.2">
    <property type="nucleotide sequence ID" value="NM_131645.2"/>
</dbReference>
<dbReference type="SMR" id="Q9DEX7"/>
<dbReference type="FunCoup" id="Q9DEX7">
    <property type="interactions" value="740"/>
</dbReference>
<dbReference type="STRING" id="7955.ENSDARP00000022396"/>
<dbReference type="SwissLipids" id="SLP:000000464"/>
<dbReference type="PaxDb" id="7955-ENSDARP00000022396"/>
<dbReference type="GeneID" id="140615"/>
<dbReference type="KEGG" id="dre:140615"/>
<dbReference type="AGR" id="ZFIN:ZDB-GENE-011212-1"/>
<dbReference type="CTD" id="9415"/>
<dbReference type="ZFIN" id="ZDB-GENE-011212-1">
    <property type="gene designation" value="fads2"/>
</dbReference>
<dbReference type="eggNOG" id="KOG4232">
    <property type="taxonomic scope" value="Eukaryota"/>
</dbReference>
<dbReference type="InParanoid" id="Q9DEX7"/>
<dbReference type="OrthoDB" id="260091at2759"/>
<dbReference type="PhylomeDB" id="Q9DEX7"/>
<dbReference type="BRENDA" id="1.14.19.3">
    <property type="organism ID" value="928"/>
</dbReference>
<dbReference type="Reactome" id="R-DRE-2046105">
    <property type="pathway name" value="Linoleic acid (LA) metabolism"/>
</dbReference>
<dbReference type="Reactome" id="R-DRE-2046106">
    <property type="pathway name" value="alpha-linolenic acid (ALA) metabolism"/>
</dbReference>
<dbReference type="UniPathway" id="UPA00658"/>
<dbReference type="ChiTaRS" id="fads2">
    <property type="organism name" value="zebrafish"/>
</dbReference>
<dbReference type="PRO" id="PR:Q9DEX7"/>
<dbReference type="Proteomes" id="UP000000437">
    <property type="component" value="Chromosome 25"/>
</dbReference>
<dbReference type="GO" id="GO:0005789">
    <property type="term" value="C:endoplasmic reticulum membrane"/>
    <property type="evidence" value="ECO:0007669"/>
    <property type="project" value="UniProtKB-SubCell"/>
</dbReference>
<dbReference type="GO" id="GO:0062076">
    <property type="term" value="F:acyl-CoA (8-3)-desaturase activity"/>
    <property type="evidence" value="ECO:0007669"/>
    <property type="project" value="UniProtKB-EC"/>
</dbReference>
<dbReference type="GO" id="GO:0016213">
    <property type="term" value="F:acyl-CoA 6-desaturase activity"/>
    <property type="evidence" value="ECO:0007669"/>
    <property type="project" value="UniProtKB-EC"/>
</dbReference>
<dbReference type="GO" id="GO:0016717">
    <property type="term" value="F:oxidoreductase activity, acting on paired donors, with oxidation of a pair of donors resulting in the reduction of molecular oxygen to two molecules of water"/>
    <property type="evidence" value="ECO:0000318"/>
    <property type="project" value="GO_Central"/>
</dbReference>
<dbReference type="GO" id="GO:0006629">
    <property type="term" value="P:lipid metabolic process"/>
    <property type="evidence" value="ECO:0000318"/>
    <property type="project" value="GO_Central"/>
</dbReference>
<dbReference type="GO" id="GO:0001889">
    <property type="term" value="P:liver development"/>
    <property type="evidence" value="ECO:0000315"/>
    <property type="project" value="ZFIN"/>
</dbReference>
<dbReference type="GO" id="GO:0006636">
    <property type="term" value="P:unsaturated fatty acid biosynthetic process"/>
    <property type="evidence" value="ECO:0007669"/>
    <property type="project" value="UniProtKB-UniPathway"/>
</dbReference>
<dbReference type="CDD" id="cd03506">
    <property type="entry name" value="Delta6-FADS-like"/>
    <property type="match status" value="1"/>
</dbReference>
<dbReference type="FunFam" id="3.10.120.10:FF:000010">
    <property type="entry name" value="Delta-6 fatty acyl desaturase"/>
    <property type="match status" value="1"/>
</dbReference>
<dbReference type="Gene3D" id="3.10.120.10">
    <property type="entry name" value="Cytochrome b5-like heme/steroid binding domain"/>
    <property type="match status" value="1"/>
</dbReference>
<dbReference type="InterPro" id="IPR001199">
    <property type="entry name" value="Cyt_B5-like_heme/steroid-bd"/>
</dbReference>
<dbReference type="InterPro" id="IPR036400">
    <property type="entry name" value="Cyt_B5-like_heme/steroid_sf"/>
</dbReference>
<dbReference type="InterPro" id="IPR005804">
    <property type="entry name" value="FA_desaturase_dom"/>
</dbReference>
<dbReference type="InterPro" id="IPR012171">
    <property type="entry name" value="Fatty_acid_desaturase"/>
</dbReference>
<dbReference type="PANTHER" id="PTHR19353:SF12">
    <property type="entry name" value="ACYL-COA 6-DESATURASE"/>
    <property type="match status" value="1"/>
</dbReference>
<dbReference type="PANTHER" id="PTHR19353">
    <property type="entry name" value="FATTY ACID DESATURASE 2"/>
    <property type="match status" value="1"/>
</dbReference>
<dbReference type="Pfam" id="PF00173">
    <property type="entry name" value="Cyt-b5"/>
    <property type="match status" value="1"/>
</dbReference>
<dbReference type="Pfam" id="PF00487">
    <property type="entry name" value="FA_desaturase"/>
    <property type="match status" value="1"/>
</dbReference>
<dbReference type="PIRSF" id="PIRSF015921">
    <property type="entry name" value="FA_sphinglp_des"/>
    <property type="match status" value="1"/>
</dbReference>
<dbReference type="PRINTS" id="PR00363">
    <property type="entry name" value="CYTOCHROMEB5"/>
</dbReference>
<dbReference type="SMART" id="SM01117">
    <property type="entry name" value="Cyt-b5"/>
    <property type="match status" value="1"/>
</dbReference>
<dbReference type="SUPFAM" id="SSF55856">
    <property type="entry name" value="Cytochrome b5-like heme/steroid binding domain"/>
    <property type="match status" value="1"/>
</dbReference>
<dbReference type="PROSITE" id="PS50255">
    <property type="entry name" value="CYTOCHROME_B5_2"/>
    <property type="match status" value="1"/>
</dbReference>
<accession>Q9DEX7</accession>
<accession>Q7ZWF3</accession>
<keyword id="KW-0249">Electron transport</keyword>
<keyword id="KW-0256">Endoplasmic reticulum</keyword>
<keyword id="KW-0275">Fatty acid biosynthesis</keyword>
<keyword id="KW-0276">Fatty acid metabolism</keyword>
<keyword id="KW-0444">Lipid biosynthesis</keyword>
<keyword id="KW-0443">Lipid metabolism</keyword>
<keyword id="KW-0472">Membrane</keyword>
<keyword id="KW-0560">Oxidoreductase</keyword>
<keyword id="KW-1185">Reference proteome</keyword>
<keyword id="KW-0812">Transmembrane</keyword>
<keyword id="KW-1133">Transmembrane helix</keyword>
<keyword id="KW-0813">Transport</keyword>